<accession>B5Z154</accession>
<protein>
    <recommendedName>
        <fullName evidence="1">Uracil-DNA glycosylase</fullName>
        <shortName evidence="1">UDG</shortName>
        <ecNumber evidence="1">3.2.2.27</ecNumber>
    </recommendedName>
</protein>
<reference key="1">
    <citation type="journal article" date="2011" name="Proc. Natl. Acad. Sci. U.S.A.">
        <title>Genomic anatomy of Escherichia coli O157:H7 outbreaks.</title>
        <authorList>
            <person name="Eppinger M."/>
            <person name="Mammel M.K."/>
            <person name="Leclerc J.E."/>
            <person name="Ravel J."/>
            <person name="Cebula T.A."/>
        </authorList>
    </citation>
    <scope>NUCLEOTIDE SEQUENCE [LARGE SCALE GENOMIC DNA]</scope>
    <source>
        <strain>EC4115 / EHEC</strain>
    </source>
</reference>
<dbReference type="EC" id="3.2.2.27" evidence="1"/>
<dbReference type="EMBL" id="CP001164">
    <property type="protein sequence ID" value="ACI37160.1"/>
    <property type="molecule type" value="Genomic_DNA"/>
</dbReference>
<dbReference type="RefSeq" id="WP_001262720.1">
    <property type="nucleotide sequence ID" value="NC_011353.1"/>
</dbReference>
<dbReference type="SMR" id="B5Z154"/>
<dbReference type="KEGG" id="ecf:ECH74115_3817"/>
<dbReference type="HOGENOM" id="CLU_032162_3_0_6"/>
<dbReference type="GO" id="GO:0005737">
    <property type="term" value="C:cytoplasm"/>
    <property type="evidence" value="ECO:0007669"/>
    <property type="project" value="UniProtKB-SubCell"/>
</dbReference>
<dbReference type="GO" id="GO:0004844">
    <property type="term" value="F:uracil DNA N-glycosylase activity"/>
    <property type="evidence" value="ECO:0007669"/>
    <property type="project" value="UniProtKB-UniRule"/>
</dbReference>
<dbReference type="GO" id="GO:0097510">
    <property type="term" value="P:base-excision repair, AP site formation via deaminated base removal"/>
    <property type="evidence" value="ECO:0007669"/>
    <property type="project" value="TreeGrafter"/>
</dbReference>
<dbReference type="CDD" id="cd10027">
    <property type="entry name" value="UDG-F1-like"/>
    <property type="match status" value="1"/>
</dbReference>
<dbReference type="FunFam" id="3.40.470.10:FF:000001">
    <property type="entry name" value="Uracil-DNA glycosylase"/>
    <property type="match status" value="1"/>
</dbReference>
<dbReference type="Gene3D" id="3.40.470.10">
    <property type="entry name" value="Uracil-DNA glycosylase-like domain"/>
    <property type="match status" value="1"/>
</dbReference>
<dbReference type="HAMAP" id="MF_00148">
    <property type="entry name" value="UDG"/>
    <property type="match status" value="1"/>
</dbReference>
<dbReference type="InterPro" id="IPR002043">
    <property type="entry name" value="UDG_fam1"/>
</dbReference>
<dbReference type="InterPro" id="IPR018085">
    <property type="entry name" value="Ura-DNA_Glyclase_AS"/>
</dbReference>
<dbReference type="InterPro" id="IPR005122">
    <property type="entry name" value="Uracil-DNA_glycosylase-like"/>
</dbReference>
<dbReference type="InterPro" id="IPR036895">
    <property type="entry name" value="Uracil-DNA_glycosylase-like_sf"/>
</dbReference>
<dbReference type="NCBIfam" id="NF003588">
    <property type="entry name" value="PRK05254.1-1"/>
    <property type="match status" value="1"/>
</dbReference>
<dbReference type="NCBIfam" id="NF003589">
    <property type="entry name" value="PRK05254.1-2"/>
    <property type="match status" value="1"/>
</dbReference>
<dbReference type="NCBIfam" id="NF003591">
    <property type="entry name" value="PRK05254.1-4"/>
    <property type="match status" value="1"/>
</dbReference>
<dbReference type="NCBIfam" id="NF003592">
    <property type="entry name" value="PRK05254.1-5"/>
    <property type="match status" value="1"/>
</dbReference>
<dbReference type="NCBIfam" id="TIGR00628">
    <property type="entry name" value="ung"/>
    <property type="match status" value="1"/>
</dbReference>
<dbReference type="PANTHER" id="PTHR11264">
    <property type="entry name" value="URACIL-DNA GLYCOSYLASE"/>
    <property type="match status" value="1"/>
</dbReference>
<dbReference type="PANTHER" id="PTHR11264:SF0">
    <property type="entry name" value="URACIL-DNA GLYCOSYLASE"/>
    <property type="match status" value="1"/>
</dbReference>
<dbReference type="Pfam" id="PF03167">
    <property type="entry name" value="UDG"/>
    <property type="match status" value="1"/>
</dbReference>
<dbReference type="SMART" id="SM00986">
    <property type="entry name" value="UDG"/>
    <property type="match status" value="1"/>
</dbReference>
<dbReference type="SMART" id="SM00987">
    <property type="entry name" value="UreE_C"/>
    <property type="match status" value="1"/>
</dbReference>
<dbReference type="SUPFAM" id="SSF52141">
    <property type="entry name" value="Uracil-DNA glycosylase-like"/>
    <property type="match status" value="1"/>
</dbReference>
<dbReference type="PROSITE" id="PS00130">
    <property type="entry name" value="U_DNA_GLYCOSYLASE"/>
    <property type="match status" value="1"/>
</dbReference>
<feature type="chain" id="PRO_1000096577" description="Uracil-DNA glycosylase">
    <location>
        <begin position="1"/>
        <end position="229"/>
    </location>
</feature>
<feature type="active site" description="Proton acceptor" evidence="1">
    <location>
        <position position="64"/>
    </location>
</feature>
<keyword id="KW-0963">Cytoplasm</keyword>
<keyword id="KW-0227">DNA damage</keyword>
<keyword id="KW-0234">DNA repair</keyword>
<keyword id="KW-0378">Hydrolase</keyword>
<organism>
    <name type="scientific">Escherichia coli O157:H7 (strain EC4115 / EHEC)</name>
    <dbReference type="NCBI Taxonomy" id="444450"/>
    <lineage>
        <taxon>Bacteria</taxon>
        <taxon>Pseudomonadati</taxon>
        <taxon>Pseudomonadota</taxon>
        <taxon>Gammaproteobacteria</taxon>
        <taxon>Enterobacterales</taxon>
        <taxon>Enterobacteriaceae</taxon>
        <taxon>Escherichia</taxon>
    </lineage>
</organism>
<sequence length="229" mass="25662">MANELTWHDVLAEEKQQPYFLNTLQTVASERQSGVTIYPPQKDVFNAFRFTELGDVKVVILGQDPYHGPGQAHGLAFSVRPGIATPPSLLNMYKELENTIPGFTRPNHGYLESWARQGVLLLNTVLTVRAGQAHSHASLGWETFTDKVISLINQHREGVVFLLWGSHAQKKGAIIDKQRHHVLKAPHPSPLSAHRGFFGCNHFVLANQWLEQHGETPIDWMPVLPAESE</sequence>
<gene>
    <name evidence="1" type="primary">ung</name>
    <name type="ordered locus">ECH74115_3817</name>
</gene>
<name>UNG_ECO5E</name>
<evidence type="ECO:0000255" key="1">
    <source>
        <dbReference type="HAMAP-Rule" id="MF_00148"/>
    </source>
</evidence>
<proteinExistence type="inferred from homology"/>
<comment type="function">
    <text evidence="1">Excises uracil residues from the DNA which can arise as a result of misincorporation of dUMP residues by DNA polymerase or due to deamination of cytosine.</text>
</comment>
<comment type="catalytic activity">
    <reaction evidence="1">
        <text>Hydrolyzes single-stranded DNA or mismatched double-stranded DNA and polynucleotides, releasing free uracil.</text>
        <dbReference type="EC" id="3.2.2.27"/>
    </reaction>
</comment>
<comment type="subcellular location">
    <subcellularLocation>
        <location evidence="1">Cytoplasm</location>
    </subcellularLocation>
</comment>
<comment type="similarity">
    <text evidence="1">Belongs to the uracil-DNA glycosylase (UDG) superfamily. UNG family.</text>
</comment>